<dbReference type="EMBL" id="AJ888457">
    <property type="protein sequence ID" value="CAI59864.1"/>
    <property type="molecule type" value="Genomic_DNA"/>
</dbReference>
<dbReference type="RefSeq" id="YP_319869.1">
    <property type="nucleotide sequence ID" value="NC_007409.1"/>
</dbReference>
<dbReference type="SMR" id="Q3V4V0"/>
<dbReference type="GeneID" id="4484239"/>
<dbReference type="KEGG" id="vg:4484239"/>
<dbReference type="Proteomes" id="UP000002150">
    <property type="component" value="Genome"/>
</dbReference>
<dbReference type="GO" id="GO:0033644">
    <property type="term" value="C:host cell membrane"/>
    <property type="evidence" value="ECO:0007669"/>
    <property type="project" value="UniProtKB-SubCell"/>
</dbReference>
<dbReference type="GO" id="GO:0016020">
    <property type="term" value="C:membrane"/>
    <property type="evidence" value="ECO:0007669"/>
    <property type="project" value="UniProtKB-KW"/>
</dbReference>
<feature type="chain" id="PRO_0000389069" description="Uncharacterized protein ORF81">
    <location>
        <begin position="1"/>
        <end position="81"/>
    </location>
</feature>
<feature type="transmembrane region" description="Helical" evidence="1">
    <location>
        <begin position="10"/>
        <end position="30"/>
    </location>
</feature>
<feature type="transmembrane region" description="Helical" evidence="1">
    <location>
        <begin position="56"/>
        <end position="76"/>
    </location>
</feature>
<protein>
    <recommendedName>
        <fullName>Uncharacterized protein ORF81</fullName>
    </recommendedName>
</protein>
<accession>Q3V4V0</accession>
<comment type="subcellular location">
    <subcellularLocation>
        <location evidence="2">Host membrane</location>
        <topology evidence="2">Multi-pass membrane protein</topology>
    </subcellularLocation>
</comment>
<organism>
    <name type="scientific">Acidianus two-tailed virus</name>
    <name type="common">ATV</name>
    <dbReference type="NCBI Taxonomy" id="315953"/>
    <lineage>
        <taxon>Viruses</taxon>
        <taxon>Viruses incertae sedis</taxon>
        <taxon>Bicaudaviridae</taxon>
        <taxon>Bicaudavirus</taxon>
    </lineage>
</organism>
<reference key="1">
    <citation type="journal article" date="2005" name="Nature">
        <title>Virology: independent virus development outside a host.</title>
        <authorList>
            <person name="Haring M."/>
            <person name="Vestergaard G."/>
            <person name="Rachel R."/>
            <person name="Chen L."/>
            <person name="Garrett R.A."/>
            <person name="Prangishvili D."/>
        </authorList>
    </citation>
    <scope>NUCLEOTIDE SEQUENCE [GENOMIC DNA]</scope>
</reference>
<proteinExistence type="predicted"/>
<sequence>MSESNNYSAFFVLLFIFTILFLIVVAFLLLGILNGAFATYAHHPLSPSLLSSLDFVLYLFAFGILAVLFLLIAFAIQRKGS</sequence>
<keyword id="KW-1043">Host membrane</keyword>
<keyword id="KW-0472">Membrane</keyword>
<keyword id="KW-1185">Reference proteome</keyword>
<keyword id="KW-0812">Transmembrane</keyword>
<keyword id="KW-1133">Transmembrane helix</keyword>
<name>Y081_ATV</name>
<organismHost>
    <name type="scientific">Acidianus convivator</name>
    <dbReference type="NCBI Taxonomy" id="269667"/>
</organismHost>
<evidence type="ECO:0000255" key="1"/>
<evidence type="ECO:0000305" key="2"/>